<reference key="1">
    <citation type="journal article" date="2002" name="Genome Res.">
        <title>The genome of Methanosarcina acetivorans reveals extensive metabolic and physiological diversity.</title>
        <authorList>
            <person name="Galagan J.E."/>
            <person name="Nusbaum C."/>
            <person name="Roy A."/>
            <person name="Endrizzi M.G."/>
            <person name="Macdonald P."/>
            <person name="FitzHugh W."/>
            <person name="Calvo S."/>
            <person name="Engels R."/>
            <person name="Smirnov S."/>
            <person name="Atnoor D."/>
            <person name="Brown A."/>
            <person name="Allen N."/>
            <person name="Naylor J."/>
            <person name="Stange-Thomann N."/>
            <person name="DeArellano K."/>
            <person name="Johnson R."/>
            <person name="Linton L."/>
            <person name="McEwan P."/>
            <person name="McKernan K."/>
            <person name="Talamas J."/>
            <person name="Tirrell A."/>
            <person name="Ye W."/>
            <person name="Zimmer A."/>
            <person name="Barber R.D."/>
            <person name="Cann I."/>
            <person name="Graham D.E."/>
            <person name="Grahame D.A."/>
            <person name="Guss A.M."/>
            <person name="Hedderich R."/>
            <person name="Ingram-Smith C."/>
            <person name="Kuettner H.C."/>
            <person name="Krzycki J.A."/>
            <person name="Leigh J.A."/>
            <person name="Li W."/>
            <person name="Liu J."/>
            <person name="Mukhopadhyay B."/>
            <person name="Reeve J.N."/>
            <person name="Smith K."/>
            <person name="Springer T.A."/>
            <person name="Umayam L.A."/>
            <person name="White O."/>
            <person name="White R.H."/>
            <person name="de Macario E.C."/>
            <person name="Ferry J.G."/>
            <person name="Jarrell K.F."/>
            <person name="Jing H."/>
            <person name="Macario A.J.L."/>
            <person name="Paulsen I.T."/>
            <person name="Pritchett M."/>
            <person name="Sowers K.R."/>
            <person name="Swanson R.V."/>
            <person name="Zinder S.H."/>
            <person name="Lander E."/>
            <person name="Metcalf W.W."/>
            <person name="Birren B."/>
        </authorList>
    </citation>
    <scope>NUCLEOTIDE SEQUENCE [LARGE SCALE GENOMIC DNA]</scope>
    <source>
        <strain>ATCC 35395 / DSM 2834 / JCM 12185 / C2A</strain>
    </source>
</reference>
<sequence length="276" mass="31081">MGTIFDLKNISYSYVGEITVLKDISFKVDPGEQISIIGSNGSGKSTLLSLLDGLIYPTVGEFYAFDNKIVEEVFDTIKDNEFRSYFRTKVGFLFQNSDVQLFSPTVFEEVAFGPLQLNITPEEVKTRVLEVLEMMELTKLKDRSPHTLSGGEKKKLCIATVLATNPDVLLLDEPTAGLDPRTQLWLTELLQELGSMGKTIIIATHDLELVEQISKRAIVMGEDHRIVVDGDVEKVLNDLNLLLSTNLIHEHMHMHGKLVHEHLHAHDKEHAHEHKN</sequence>
<keyword id="KW-0067">ATP-binding</keyword>
<keyword id="KW-1003">Cell membrane</keyword>
<keyword id="KW-0472">Membrane</keyword>
<keyword id="KW-0547">Nucleotide-binding</keyword>
<keyword id="KW-1185">Reference proteome</keyword>
<keyword id="KW-1278">Translocase</keyword>
<keyword id="KW-0813">Transport</keyword>
<feature type="chain" id="PRO_0000092134" description="Putative ABC transporter ATP-binding protein MA_4021">
    <location>
        <begin position="1"/>
        <end position="276"/>
    </location>
</feature>
<feature type="domain" description="ABC transporter" evidence="2">
    <location>
        <begin position="5"/>
        <end position="247"/>
    </location>
</feature>
<feature type="binding site" evidence="2">
    <location>
        <begin position="38"/>
        <end position="45"/>
    </location>
    <ligand>
        <name>ATP</name>
        <dbReference type="ChEBI" id="CHEBI:30616"/>
    </ligand>
</feature>
<evidence type="ECO:0000250" key="1"/>
<evidence type="ECO:0000255" key="2">
    <source>
        <dbReference type="PROSITE-ProRule" id="PRU00434"/>
    </source>
</evidence>
<evidence type="ECO:0000305" key="3"/>
<comment type="function">
    <text evidence="1">Probably part of an ABC transporter complex. Responsible for energy coupling to the transport system (By similarity).</text>
</comment>
<comment type="subcellular location">
    <subcellularLocation>
        <location evidence="1">Cell membrane</location>
        <topology evidence="1">Peripheral membrane protein</topology>
    </subcellularLocation>
</comment>
<comment type="similarity">
    <text evidence="3">Belongs to the ABC transporter superfamily.</text>
</comment>
<name>Y4021_METAC</name>
<gene>
    <name type="ordered locus">MA_4021</name>
</gene>
<accession>Q8TIW9</accession>
<protein>
    <recommendedName>
        <fullName>Putative ABC transporter ATP-binding protein MA_4021</fullName>
        <ecNumber>7.-.-.-</ecNumber>
    </recommendedName>
</protein>
<proteinExistence type="inferred from homology"/>
<organism>
    <name type="scientific">Methanosarcina acetivorans (strain ATCC 35395 / DSM 2834 / JCM 12185 / C2A)</name>
    <dbReference type="NCBI Taxonomy" id="188937"/>
    <lineage>
        <taxon>Archaea</taxon>
        <taxon>Methanobacteriati</taxon>
        <taxon>Methanobacteriota</taxon>
        <taxon>Stenosarchaea group</taxon>
        <taxon>Methanomicrobia</taxon>
        <taxon>Methanosarcinales</taxon>
        <taxon>Methanosarcinaceae</taxon>
        <taxon>Methanosarcina</taxon>
    </lineage>
</organism>
<dbReference type="EC" id="7.-.-.-"/>
<dbReference type="EMBL" id="AE010299">
    <property type="protein sequence ID" value="AAM07370.1"/>
    <property type="molecule type" value="Genomic_DNA"/>
</dbReference>
<dbReference type="RefSeq" id="WP_011023915.1">
    <property type="nucleotide sequence ID" value="NC_003552.1"/>
</dbReference>
<dbReference type="SMR" id="Q8TIW9"/>
<dbReference type="STRING" id="188937.MA_4021"/>
<dbReference type="EnsemblBacteria" id="AAM07370">
    <property type="protein sequence ID" value="AAM07370"/>
    <property type="gene ID" value="MA_4021"/>
</dbReference>
<dbReference type="GeneID" id="1475915"/>
<dbReference type="KEGG" id="mac:MA_4021"/>
<dbReference type="HOGENOM" id="CLU_000604_1_22_2"/>
<dbReference type="InParanoid" id="Q8TIW9"/>
<dbReference type="OrthoDB" id="18209at2157"/>
<dbReference type="PhylomeDB" id="Q8TIW9"/>
<dbReference type="Proteomes" id="UP000002487">
    <property type="component" value="Chromosome"/>
</dbReference>
<dbReference type="GO" id="GO:0005886">
    <property type="term" value="C:plasma membrane"/>
    <property type="evidence" value="ECO:0007669"/>
    <property type="project" value="UniProtKB-SubCell"/>
</dbReference>
<dbReference type="GO" id="GO:0005524">
    <property type="term" value="F:ATP binding"/>
    <property type="evidence" value="ECO:0007669"/>
    <property type="project" value="UniProtKB-KW"/>
</dbReference>
<dbReference type="GO" id="GO:0016887">
    <property type="term" value="F:ATP hydrolysis activity"/>
    <property type="evidence" value="ECO:0007669"/>
    <property type="project" value="InterPro"/>
</dbReference>
<dbReference type="GO" id="GO:0055085">
    <property type="term" value="P:transmembrane transport"/>
    <property type="evidence" value="ECO:0007669"/>
    <property type="project" value="InterPro"/>
</dbReference>
<dbReference type="CDD" id="cd03225">
    <property type="entry name" value="ABC_cobalt_CbiO_domain1"/>
    <property type="match status" value="1"/>
</dbReference>
<dbReference type="FunFam" id="3.40.50.300:FF:000224">
    <property type="entry name" value="Energy-coupling factor transporter ATP-binding protein EcfA"/>
    <property type="match status" value="1"/>
</dbReference>
<dbReference type="Gene3D" id="3.40.50.300">
    <property type="entry name" value="P-loop containing nucleotide triphosphate hydrolases"/>
    <property type="match status" value="1"/>
</dbReference>
<dbReference type="InterPro" id="IPR003593">
    <property type="entry name" value="AAA+_ATPase"/>
</dbReference>
<dbReference type="InterPro" id="IPR003439">
    <property type="entry name" value="ABC_transporter-like_ATP-bd"/>
</dbReference>
<dbReference type="InterPro" id="IPR017871">
    <property type="entry name" value="ABC_transporter-like_CS"/>
</dbReference>
<dbReference type="InterPro" id="IPR015856">
    <property type="entry name" value="ABC_transpr_CbiO/EcfA_su"/>
</dbReference>
<dbReference type="InterPro" id="IPR027417">
    <property type="entry name" value="P-loop_NTPase"/>
</dbReference>
<dbReference type="PANTHER" id="PTHR43850">
    <property type="entry name" value="ABC TRANSPORTER ATP-BINDING PROTEIN MA_4021-RELATED"/>
    <property type="match status" value="1"/>
</dbReference>
<dbReference type="PANTHER" id="PTHR43850:SF2">
    <property type="entry name" value="ABC TRANSPORTER ATP-BINDING PROTEIN MA_4021-RELATED"/>
    <property type="match status" value="1"/>
</dbReference>
<dbReference type="Pfam" id="PF00005">
    <property type="entry name" value="ABC_tran"/>
    <property type="match status" value="1"/>
</dbReference>
<dbReference type="SMART" id="SM00382">
    <property type="entry name" value="AAA"/>
    <property type="match status" value="1"/>
</dbReference>
<dbReference type="SUPFAM" id="SSF52540">
    <property type="entry name" value="P-loop containing nucleoside triphosphate hydrolases"/>
    <property type="match status" value="1"/>
</dbReference>
<dbReference type="PROSITE" id="PS00211">
    <property type="entry name" value="ABC_TRANSPORTER_1"/>
    <property type="match status" value="1"/>
</dbReference>
<dbReference type="PROSITE" id="PS50893">
    <property type="entry name" value="ABC_TRANSPORTER_2"/>
    <property type="match status" value="1"/>
</dbReference>